<evidence type="ECO:0000255" key="1">
    <source>
        <dbReference type="HAMAP-Rule" id="MF_01522"/>
    </source>
</evidence>
<evidence type="ECO:0000256" key="2">
    <source>
        <dbReference type="SAM" id="MobiDB-lite"/>
    </source>
</evidence>
<comment type="function">
    <text evidence="1">Transport of potassium into the cell. Likely operates as a K(+):H(+) symporter.</text>
</comment>
<comment type="catalytic activity">
    <reaction evidence="1">
        <text>K(+)(in) + H(+)(in) = K(+)(out) + H(+)(out)</text>
        <dbReference type="Rhea" id="RHEA:28490"/>
        <dbReference type="ChEBI" id="CHEBI:15378"/>
        <dbReference type="ChEBI" id="CHEBI:29103"/>
    </reaction>
    <physiologicalReaction direction="right-to-left" evidence="1">
        <dbReference type="Rhea" id="RHEA:28492"/>
    </physiologicalReaction>
</comment>
<comment type="subcellular location">
    <subcellularLocation>
        <location evidence="1">Cell inner membrane</location>
        <topology evidence="1">Multi-pass membrane protein</topology>
    </subcellularLocation>
</comment>
<comment type="similarity">
    <text evidence="1">Belongs to the HAK/KUP transporter (TC 2.A.72) family.</text>
</comment>
<protein>
    <recommendedName>
        <fullName evidence="1">Probable potassium transport system protein Kup</fullName>
    </recommendedName>
</protein>
<accession>Q3B1C1</accession>
<dbReference type="EMBL" id="CP000096">
    <property type="protein sequence ID" value="ABB24860.1"/>
    <property type="molecule type" value="Genomic_DNA"/>
</dbReference>
<dbReference type="KEGG" id="plt:Plut_2018"/>
<dbReference type="eggNOG" id="COG3158">
    <property type="taxonomic scope" value="Bacteria"/>
</dbReference>
<dbReference type="HOGENOM" id="CLU_008142_4_2_10"/>
<dbReference type="OrthoDB" id="9805577at2"/>
<dbReference type="Proteomes" id="UP000002709">
    <property type="component" value="Chromosome"/>
</dbReference>
<dbReference type="GO" id="GO:0005886">
    <property type="term" value="C:plasma membrane"/>
    <property type="evidence" value="ECO:0007669"/>
    <property type="project" value="UniProtKB-SubCell"/>
</dbReference>
<dbReference type="GO" id="GO:0015079">
    <property type="term" value="F:potassium ion transmembrane transporter activity"/>
    <property type="evidence" value="ECO:0007669"/>
    <property type="project" value="UniProtKB-UniRule"/>
</dbReference>
<dbReference type="GO" id="GO:0015293">
    <property type="term" value="F:symporter activity"/>
    <property type="evidence" value="ECO:0007669"/>
    <property type="project" value="UniProtKB-UniRule"/>
</dbReference>
<dbReference type="HAMAP" id="MF_01522">
    <property type="entry name" value="Kup"/>
    <property type="match status" value="1"/>
</dbReference>
<dbReference type="InterPro" id="IPR003855">
    <property type="entry name" value="K+_transporter"/>
</dbReference>
<dbReference type="InterPro" id="IPR053952">
    <property type="entry name" value="K_trans_C"/>
</dbReference>
<dbReference type="InterPro" id="IPR053951">
    <property type="entry name" value="K_trans_N"/>
</dbReference>
<dbReference type="InterPro" id="IPR023051">
    <property type="entry name" value="Kup"/>
</dbReference>
<dbReference type="PANTHER" id="PTHR30540:SF79">
    <property type="entry name" value="LOW AFFINITY POTASSIUM TRANSPORT SYSTEM PROTEIN KUP"/>
    <property type="match status" value="1"/>
</dbReference>
<dbReference type="PANTHER" id="PTHR30540">
    <property type="entry name" value="OSMOTIC STRESS POTASSIUM TRANSPORTER"/>
    <property type="match status" value="1"/>
</dbReference>
<dbReference type="Pfam" id="PF02705">
    <property type="entry name" value="K_trans"/>
    <property type="match status" value="1"/>
</dbReference>
<dbReference type="Pfam" id="PF22776">
    <property type="entry name" value="K_trans_C"/>
    <property type="match status" value="1"/>
</dbReference>
<gene>
    <name evidence="1" type="primary">kup</name>
    <name type="ordered locus">Plut_2018</name>
</gene>
<proteinExistence type="inferred from homology"/>
<feature type="chain" id="PRO_0000279807" description="Probable potassium transport system protein Kup">
    <location>
        <begin position="1"/>
        <end position="643"/>
    </location>
</feature>
<feature type="transmembrane region" description="Helical" evidence="1">
    <location>
        <begin position="28"/>
        <end position="48"/>
    </location>
</feature>
<feature type="transmembrane region" description="Helical" evidence="1">
    <location>
        <begin position="65"/>
        <end position="85"/>
    </location>
</feature>
<feature type="transmembrane region" description="Helical" evidence="1">
    <location>
        <begin position="121"/>
        <end position="141"/>
    </location>
</feature>
<feature type="transmembrane region" description="Helical" evidence="1">
    <location>
        <begin position="158"/>
        <end position="178"/>
    </location>
</feature>
<feature type="transmembrane region" description="Helical" evidence="1">
    <location>
        <begin position="187"/>
        <end position="207"/>
    </location>
</feature>
<feature type="transmembrane region" description="Helical" evidence="1">
    <location>
        <begin position="224"/>
        <end position="244"/>
    </location>
</feature>
<feature type="transmembrane region" description="Helical" evidence="1">
    <location>
        <begin position="268"/>
        <end position="288"/>
    </location>
</feature>
<feature type="transmembrane region" description="Helical" evidence="1">
    <location>
        <begin position="301"/>
        <end position="321"/>
    </location>
</feature>
<feature type="transmembrane region" description="Helical" evidence="1">
    <location>
        <begin position="358"/>
        <end position="378"/>
    </location>
</feature>
<feature type="transmembrane region" description="Helical" evidence="1">
    <location>
        <begin position="384"/>
        <end position="404"/>
    </location>
</feature>
<feature type="transmembrane region" description="Helical" evidence="1">
    <location>
        <begin position="415"/>
        <end position="435"/>
    </location>
</feature>
<feature type="transmembrane region" description="Helical" evidence="1">
    <location>
        <begin position="440"/>
        <end position="460"/>
    </location>
</feature>
<feature type="region of interest" description="Disordered" evidence="2">
    <location>
        <begin position="1"/>
        <end position="20"/>
    </location>
</feature>
<feature type="compositionally biased region" description="Basic and acidic residues" evidence="2">
    <location>
        <begin position="1"/>
        <end position="12"/>
    </location>
</feature>
<organism>
    <name type="scientific">Chlorobium luteolum (strain DSM 273 / BCRC 81028 / 2530)</name>
    <name type="common">Pelodictyon luteolum</name>
    <dbReference type="NCBI Taxonomy" id="319225"/>
    <lineage>
        <taxon>Bacteria</taxon>
        <taxon>Pseudomonadati</taxon>
        <taxon>Chlorobiota</taxon>
        <taxon>Chlorobiia</taxon>
        <taxon>Chlorobiales</taxon>
        <taxon>Chlorobiaceae</taxon>
        <taxon>Chlorobium/Pelodictyon group</taxon>
        <taxon>Pelodictyon</taxon>
    </lineage>
</organism>
<name>KUP_CHLL3</name>
<reference key="1">
    <citation type="submission" date="2005-08" db="EMBL/GenBank/DDBJ databases">
        <title>Complete sequence of Pelodictyon luteolum DSM 273.</title>
        <authorList>
            <consortium name="US DOE Joint Genome Institute"/>
            <person name="Copeland A."/>
            <person name="Lucas S."/>
            <person name="Lapidus A."/>
            <person name="Barry K."/>
            <person name="Detter J.C."/>
            <person name="Glavina T."/>
            <person name="Hammon N."/>
            <person name="Israni S."/>
            <person name="Pitluck S."/>
            <person name="Bryant D."/>
            <person name="Schmutz J."/>
            <person name="Larimer F."/>
            <person name="Land M."/>
            <person name="Kyrpides N."/>
            <person name="Ivanova N."/>
            <person name="Richardson P."/>
        </authorList>
    </citation>
    <scope>NUCLEOTIDE SEQUENCE [LARGE SCALE GENOMIC DNA]</scope>
    <source>
        <strain>DSM 273 / BCRC 81028 / 2530</strain>
    </source>
</reference>
<sequence>MSISSKTEDSDIRSSVMTDHGPSGMKRLAGLSLAALGVVFGDIGTSPLYAVRECFHGEYGITASAGNVLGVLSLLFWALVLIVGLKYLTFIMRADNDGEGGILALTALIITHSRNRGYERWLLVAIGLFGASLLYGDGMITPAISVLSAIEGLQIIAPAFHEMVIPLTMLVLAGLFLFQHNGTARVGALFGPIILLWFIAIAILGIIEIVKYPQVLQAMLPWHGISFLLGNNLKGFTVLGAVFLSVTGAEALYADMGHFGRRPIRITWFLLVLPALLLNYFGQGALLLSSPGEAHHPFYGLVPSWAMIPMVLLATSATIIASQALITGVFSLTQQAIQLGYLPRLTVTHTSARHMGQIYVPAANWSLMVGTIGIVAWFGSSSKLAAAYGVAVTATMLISTILFYYIARDLWKWNPAALNVMITFFAAIDLSFFGASMSKLFHGAWVPLAVALVMFTIMNTWKQGRKLLMRQLQDRTLTVDEFIRSLALQQPQRVPGQVVYLTANPDVVPIALLHNLRHNKVLHSEVALFHFSNERVPRVPNSRKIEVDRLGDGFTRVIARYGFLEYPNISQVLALANQQGLNFKPEGISFFLSREKIVAGEKTKMFPSRKKLFALMARNALSATAYYDLPSGQVIEIGVQVQI</sequence>
<keyword id="KW-0997">Cell inner membrane</keyword>
<keyword id="KW-1003">Cell membrane</keyword>
<keyword id="KW-0406">Ion transport</keyword>
<keyword id="KW-0472">Membrane</keyword>
<keyword id="KW-0630">Potassium</keyword>
<keyword id="KW-0633">Potassium transport</keyword>
<keyword id="KW-1185">Reference proteome</keyword>
<keyword id="KW-0769">Symport</keyword>
<keyword id="KW-0812">Transmembrane</keyword>
<keyword id="KW-1133">Transmembrane helix</keyword>
<keyword id="KW-0813">Transport</keyword>